<keyword id="KW-0150">Chloroplast</keyword>
<keyword id="KW-0934">Plastid</keyword>
<keyword id="KW-0687">Ribonucleoprotein</keyword>
<keyword id="KW-0689">Ribosomal protein</keyword>
<comment type="subunit">
    <text evidence="1">Part of the 50S ribosomal subunit.</text>
</comment>
<comment type="subcellular location">
    <subcellularLocation>
        <location>Plastid</location>
        <location>Chloroplast</location>
    </subcellularLocation>
</comment>
<comment type="similarity">
    <text evidence="4">Belongs to the universal ribosomal protein uL2 family.</text>
</comment>
<name>RK2_DRANE</name>
<sequence length="274" mass="29865">MAIHLYKTSTPSTRNGAVDSQVKSNPRNNLICGQHHCGKGRNARGIITVRHRGGGHKRLYRKIDFRRNAKDIYGRIVTIEYDPNRNAYICLIHYGDGEKRYILHPRGAIIGDTIVSGTEVPIKMGNALPLTDMPLGTAIHNIEITLGKGGQLARAAGAVAKLIAKEGKSATLKLPSGEVRLISKNCSATVGQVGNVGVNQKSLGRAGSKCWLGKRPVVRGVVMNPVDHPHGGGEGRAPIGRKKPVTPWGYPALGRRTRKRKKYSETLILRRRSK</sequence>
<geneLocation type="chloroplast"/>
<protein>
    <recommendedName>
        <fullName evidence="2">Large ribosomal subunit protein uL2cz/uL2cy</fullName>
    </recommendedName>
    <alternativeName>
        <fullName evidence="4">50S ribosomal protein L2, chloroplastic</fullName>
    </alternativeName>
</protein>
<gene>
    <name type="primary">rpl2-A</name>
</gene>
<gene>
    <name type="primary">rpl2-B</name>
</gene>
<dbReference type="EMBL" id="AP009373">
    <property type="protein sequence ID" value="BAF50415.1"/>
    <property type="molecule type" value="Genomic_DNA"/>
</dbReference>
<dbReference type="EMBL" id="AP009373">
    <property type="protein sequence ID" value="BAF50440.1"/>
    <property type="molecule type" value="Genomic_DNA"/>
</dbReference>
<dbReference type="SMR" id="A4QL60"/>
<dbReference type="GO" id="GO:0009507">
    <property type="term" value="C:chloroplast"/>
    <property type="evidence" value="ECO:0007669"/>
    <property type="project" value="UniProtKB-SubCell"/>
</dbReference>
<dbReference type="GO" id="GO:0005762">
    <property type="term" value="C:mitochondrial large ribosomal subunit"/>
    <property type="evidence" value="ECO:0007669"/>
    <property type="project" value="TreeGrafter"/>
</dbReference>
<dbReference type="GO" id="GO:0019843">
    <property type="term" value="F:rRNA binding"/>
    <property type="evidence" value="ECO:0007669"/>
    <property type="project" value="UniProtKB-UniRule"/>
</dbReference>
<dbReference type="GO" id="GO:0003735">
    <property type="term" value="F:structural constituent of ribosome"/>
    <property type="evidence" value="ECO:0007669"/>
    <property type="project" value="InterPro"/>
</dbReference>
<dbReference type="GO" id="GO:0016740">
    <property type="term" value="F:transferase activity"/>
    <property type="evidence" value="ECO:0007669"/>
    <property type="project" value="InterPro"/>
</dbReference>
<dbReference type="GO" id="GO:0032543">
    <property type="term" value="P:mitochondrial translation"/>
    <property type="evidence" value="ECO:0007669"/>
    <property type="project" value="TreeGrafter"/>
</dbReference>
<dbReference type="FunFam" id="4.10.950.10:FF:000001">
    <property type="entry name" value="50S ribosomal protein L2"/>
    <property type="match status" value="1"/>
</dbReference>
<dbReference type="FunFam" id="2.30.30.30:FF:000008">
    <property type="entry name" value="50S ribosomal protein L2, chloroplastic"/>
    <property type="match status" value="1"/>
</dbReference>
<dbReference type="FunFam" id="2.40.50.140:FF:000029">
    <property type="entry name" value="50S ribosomal protein L2, chloroplastic"/>
    <property type="match status" value="1"/>
</dbReference>
<dbReference type="Gene3D" id="2.30.30.30">
    <property type="match status" value="1"/>
</dbReference>
<dbReference type="Gene3D" id="2.40.50.140">
    <property type="entry name" value="Nucleic acid-binding proteins"/>
    <property type="match status" value="1"/>
</dbReference>
<dbReference type="Gene3D" id="4.10.950.10">
    <property type="entry name" value="Ribosomal protein L2, domain 3"/>
    <property type="match status" value="1"/>
</dbReference>
<dbReference type="HAMAP" id="MF_01320_B">
    <property type="entry name" value="Ribosomal_uL2_B"/>
    <property type="match status" value="1"/>
</dbReference>
<dbReference type="InterPro" id="IPR012340">
    <property type="entry name" value="NA-bd_OB-fold"/>
</dbReference>
<dbReference type="InterPro" id="IPR014722">
    <property type="entry name" value="Rib_uL2_dom2"/>
</dbReference>
<dbReference type="InterPro" id="IPR002171">
    <property type="entry name" value="Ribosomal_uL2"/>
</dbReference>
<dbReference type="InterPro" id="IPR005880">
    <property type="entry name" value="Ribosomal_uL2_bac/org-type"/>
</dbReference>
<dbReference type="InterPro" id="IPR022669">
    <property type="entry name" value="Ribosomal_uL2_C"/>
</dbReference>
<dbReference type="InterPro" id="IPR022671">
    <property type="entry name" value="Ribosomal_uL2_CS"/>
</dbReference>
<dbReference type="InterPro" id="IPR014726">
    <property type="entry name" value="Ribosomal_uL2_dom3"/>
</dbReference>
<dbReference type="InterPro" id="IPR022666">
    <property type="entry name" value="Ribosomal_uL2_RNA-bd_dom"/>
</dbReference>
<dbReference type="InterPro" id="IPR008991">
    <property type="entry name" value="Translation_prot_SH3-like_sf"/>
</dbReference>
<dbReference type="NCBIfam" id="TIGR01171">
    <property type="entry name" value="rplB_bact"/>
    <property type="match status" value="1"/>
</dbReference>
<dbReference type="PANTHER" id="PTHR13691:SF5">
    <property type="entry name" value="LARGE RIBOSOMAL SUBUNIT PROTEIN UL2M"/>
    <property type="match status" value="1"/>
</dbReference>
<dbReference type="PANTHER" id="PTHR13691">
    <property type="entry name" value="RIBOSOMAL PROTEIN L2"/>
    <property type="match status" value="1"/>
</dbReference>
<dbReference type="Pfam" id="PF00181">
    <property type="entry name" value="Ribosomal_L2"/>
    <property type="match status" value="1"/>
</dbReference>
<dbReference type="Pfam" id="PF03947">
    <property type="entry name" value="Ribosomal_L2_C"/>
    <property type="match status" value="1"/>
</dbReference>
<dbReference type="PIRSF" id="PIRSF002158">
    <property type="entry name" value="Ribosomal_L2"/>
    <property type="match status" value="1"/>
</dbReference>
<dbReference type="SMART" id="SM01383">
    <property type="entry name" value="Ribosomal_L2"/>
    <property type="match status" value="1"/>
</dbReference>
<dbReference type="SMART" id="SM01382">
    <property type="entry name" value="Ribosomal_L2_C"/>
    <property type="match status" value="1"/>
</dbReference>
<dbReference type="SUPFAM" id="SSF50249">
    <property type="entry name" value="Nucleic acid-binding proteins"/>
    <property type="match status" value="1"/>
</dbReference>
<dbReference type="SUPFAM" id="SSF50104">
    <property type="entry name" value="Translation proteins SH3-like domain"/>
    <property type="match status" value="1"/>
</dbReference>
<dbReference type="PROSITE" id="PS00467">
    <property type="entry name" value="RIBOSOMAL_L2"/>
    <property type="match status" value="1"/>
</dbReference>
<reference key="1">
    <citation type="submission" date="2007-03" db="EMBL/GenBank/DDBJ databases">
        <title>Sequencing analysis of Draba nemoroza chloroplast DNA.</title>
        <authorList>
            <person name="Hosouchi T."/>
            <person name="Tsuruoka H."/>
            <person name="Kotani H."/>
        </authorList>
    </citation>
    <scope>NUCLEOTIDE SEQUENCE [LARGE SCALE GENOMIC DNA]</scope>
</reference>
<feature type="chain" id="PRO_0000310076" description="Large ribosomal subunit protein uL2cz/uL2cy">
    <location>
        <begin position="1"/>
        <end position="274"/>
    </location>
</feature>
<feature type="region of interest" description="Disordered" evidence="3">
    <location>
        <begin position="1"/>
        <end position="21"/>
    </location>
</feature>
<feature type="region of interest" description="Disordered" evidence="3">
    <location>
        <begin position="225"/>
        <end position="254"/>
    </location>
</feature>
<organism>
    <name type="scientific">Draba nemorosa</name>
    <name type="common">Woodland whitlowgrass</name>
    <dbReference type="NCBI Taxonomy" id="171822"/>
    <lineage>
        <taxon>Eukaryota</taxon>
        <taxon>Viridiplantae</taxon>
        <taxon>Streptophyta</taxon>
        <taxon>Embryophyta</taxon>
        <taxon>Tracheophyta</taxon>
        <taxon>Spermatophyta</taxon>
        <taxon>Magnoliopsida</taxon>
        <taxon>eudicotyledons</taxon>
        <taxon>Gunneridae</taxon>
        <taxon>Pentapetalae</taxon>
        <taxon>rosids</taxon>
        <taxon>malvids</taxon>
        <taxon>Brassicales</taxon>
        <taxon>Brassicaceae</taxon>
        <taxon>Arabideae</taxon>
        <taxon>Draba</taxon>
    </lineage>
</organism>
<proteinExistence type="inferred from homology"/>
<evidence type="ECO:0000250" key="1"/>
<evidence type="ECO:0000255" key="2">
    <source>
        <dbReference type="HAMAP-Rule" id="MF_01320"/>
    </source>
</evidence>
<evidence type="ECO:0000256" key="3">
    <source>
        <dbReference type="SAM" id="MobiDB-lite"/>
    </source>
</evidence>
<evidence type="ECO:0000305" key="4"/>
<accession>A4QL60</accession>